<feature type="chain" id="PRO_1000211852" description="Nitrogenase iron protein">
    <location>
        <begin position="1"/>
        <end position="272"/>
    </location>
</feature>
<feature type="binding site" evidence="1">
    <location>
        <begin position="8"/>
        <end position="15"/>
    </location>
    <ligand>
        <name>ATP</name>
        <dbReference type="ChEBI" id="CHEBI:30616"/>
    </ligand>
</feature>
<feature type="binding site" evidence="1">
    <location>
        <position position="94"/>
    </location>
    <ligand>
        <name>[4Fe-4S] cluster</name>
        <dbReference type="ChEBI" id="CHEBI:49883"/>
        <note>ligand shared between dimeric partners</note>
    </ligand>
</feature>
<feature type="binding site" evidence="1">
    <location>
        <position position="129"/>
    </location>
    <ligand>
        <name>[4Fe-4S] cluster</name>
        <dbReference type="ChEBI" id="CHEBI:49883"/>
        <note>ligand shared between dimeric partners</note>
    </ligand>
</feature>
<feature type="modified residue" description="ADP-ribosylarginine; by dinitrogenase reductase ADP-ribosyltransferase" evidence="1">
    <location>
        <position position="97"/>
    </location>
</feature>
<dbReference type="EC" id="1.18.6.1" evidence="1"/>
<dbReference type="EMBL" id="CP000724">
    <property type="protein sequence ID" value="ABR49651.1"/>
    <property type="molecule type" value="Genomic_DNA"/>
</dbReference>
<dbReference type="SMR" id="A6TTY3"/>
<dbReference type="STRING" id="293826.Amet_3524"/>
<dbReference type="KEGG" id="amt:Amet_3524"/>
<dbReference type="eggNOG" id="COG1348">
    <property type="taxonomic scope" value="Bacteria"/>
</dbReference>
<dbReference type="HOGENOM" id="CLU_059373_0_0_9"/>
<dbReference type="OrthoDB" id="9778641at2"/>
<dbReference type="Proteomes" id="UP000001572">
    <property type="component" value="Chromosome"/>
</dbReference>
<dbReference type="GO" id="GO:0051539">
    <property type="term" value="F:4 iron, 4 sulfur cluster binding"/>
    <property type="evidence" value="ECO:0007669"/>
    <property type="project" value="UniProtKB-KW"/>
</dbReference>
<dbReference type="GO" id="GO:0005524">
    <property type="term" value="F:ATP binding"/>
    <property type="evidence" value="ECO:0007669"/>
    <property type="project" value="UniProtKB-UniRule"/>
</dbReference>
<dbReference type="GO" id="GO:0046872">
    <property type="term" value="F:metal ion binding"/>
    <property type="evidence" value="ECO:0007669"/>
    <property type="project" value="UniProtKB-KW"/>
</dbReference>
<dbReference type="GO" id="GO:0016163">
    <property type="term" value="F:nitrogenase activity"/>
    <property type="evidence" value="ECO:0007669"/>
    <property type="project" value="UniProtKB-UniRule"/>
</dbReference>
<dbReference type="GO" id="GO:0009399">
    <property type="term" value="P:nitrogen fixation"/>
    <property type="evidence" value="ECO:0007669"/>
    <property type="project" value="UniProtKB-UniRule"/>
</dbReference>
<dbReference type="CDD" id="cd02040">
    <property type="entry name" value="NifH"/>
    <property type="match status" value="1"/>
</dbReference>
<dbReference type="Gene3D" id="3.40.50.300">
    <property type="entry name" value="P-loop containing nucleotide triphosphate hydrolases"/>
    <property type="match status" value="1"/>
</dbReference>
<dbReference type="HAMAP" id="MF_00533">
    <property type="entry name" value="NifH"/>
    <property type="match status" value="1"/>
</dbReference>
<dbReference type="InterPro" id="IPR030655">
    <property type="entry name" value="NifH/chlL_CS"/>
</dbReference>
<dbReference type="InterPro" id="IPR000392">
    <property type="entry name" value="NifH/frxC"/>
</dbReference>
<dbReference type="InterPro" id="IPR005977">
    <property type="entry name" value="Nitrogenase_Fe_NifH"/>
</dbReference>
<dbReference type="InterPro" id="IPR027417">
    <property type="entry name" value="P-loop_NTPase"/>
</dbReference>
<dbReference type="NCBIfam" id="TIGR01287">
    <property type="entry name" value="nifH"/>
    <property type="match status" value="1"/>
</dbReference>
<dbReference type="PANTHER" id="PTHR42864">
    <property type="entry name" value="LIGHT-INDEPENDENT PROTOCHLOROPHYLLIDE REDUCTASE IRON-SULFUR ATP-BINDING PROTEIN"/>
    <property type="match status" value="1"/>
</dbReference>
<dbReference type="PANTHER" id="PTHR42864:SF2">
    <property type="entry name" value="LIGHT-INDEPENDENT PROTOCHLOROPHYLLIDE REDUCTASE IRON-SULFUR ATP-BINDING PROTEIN"/>
    <property type="match status" value="1"/>
</dbReference>
<dbReference type="Pfam" id="PF00142">
    <property type="entry name" value="Fer4_NifH"/>
    <property type="match status" value="1"/>
</dbReference>
<dbReference type="PIRSF" id="PIRSF000363">
    <property type="entry name" value="Nitrogenase_iron"/>
    <property type="match status" value="1"/>
</dbReference>
<dbReference type="PRINTS" id="PR00091">
    <property type="entry name" value="NITROGNASEII"/>
</dbReference>
<dbReference type="SUPFAM" id="SSF52540">
    <property type="entry name" value="P-loop containing nucleoside triphosphate hydrolases"/>
    <property type="match status" value="1"/>
</dbReference>
<dbReference type="PROSITE" id="PS00746">
    <property type="entry name" value="NIFH_FRXC_1"/>
    <property type="match status" value="1"/>
</dbReference>
<dbReference type="PROSITE" id="PS00692">
    <property type="entry name" value="NIFH_FRXC_2"/>
    <property type="match status" value="1"/>
</dbReference>
<dbReference type="PROSITE" id="PS51026">
    <property type="entry name" value="NIFH_FRXC_3"/>
    <property type="match status" value="1"/>
</dbReference>
<gene>
    <name evidence="1" type="primary">nifH</name>
    <name type="ordered locus">Amet_3524</name>
</gene>
<sequence>MRQIAIYGKGGIGKSTTTQNLTAALGESGKKIMIVGCDPKADSTRLILGGLTQKTVMDTLREEGEDIDLEDILKPGFSGIKCVESGGPEPGVGCAGRGIITSINMLESLGAYESDLDYVFYDVLGDVVCGGFAMPIREGKAQEIYIVASGELMALYAANNIAKGIQKYAKSGGTRLGGIICNSRQVDYEHELLEAFAKELGSQLIYFVPRDNIVQRAEINKKAVIEFEPECGQANEYRALAKSIDENKMFVIPKPMHTDRLEELMMEHGVLG</sequence>
<name>NIFH_ALKMQ</name>
<proteinExistence type="inferred from homology"/>
<protein>
    <recommendedName>
        <fullName evidence="1">Nitrogenase iron protein</fullName>
        <ecNumber evidence="1">1.18.6.1</ecNumber>
    </recommendedName>
    <alternativeName>
        <fullName evidence="1">Nitrogenase Fe protein</fullName>
    </alternativeName>
    <alternativeName>
        <fullName evidence="1">Nitrogenase component II</fullName>
    </alternativeName>
    <alternativeName>
        <fullName evidence="1">Nitrogenase reductase</fullName>
    </alternativeName>
</protein>
<organism>
    <name type="scientific">Alkaliphilus metalliredigens (strain QYMF)</name>
    <dbReference type="NCBI Taxonomy" id="293826"/>
    <lineage>
        <taxon>Bacteria</taxon>
        <taxon>Bacillati</taxon>
        <taxon>Bacillota</taxon>
        <taxon>Clostridia</taxon>
        <taxon>Peptostreptococcales</taxon>
        <taxon>Natronincolaceae</taxon>
        <taxon>Alkaliphilus</taxon>
    </lineage>
</organism>
<keyword id="KW-0004">4Fe-4S</keyword>
<keyword id="KW-0013">ADP-ribosylation</keyword>
<keyword id="KW-0067">ATP-binding</keyword>
<keyword id="KW-0408">Iron</keyword>
<keyword id="KW-0411">Iron-sulfur</keyword>
<keyword id="KW-0479">Metal-binding</keyword>
<keyword id="KW-0535">Nitrogen fixation</keyword>
<keyword id="KW-0547">Nucleotide-binding</keyword>
<keyword id="KW-0560">Oxidoreductase</keyword>
<keyword id="KW-1185">Reference proteome</keyword>
<comment type="function">
    <text evidence="1">The key enzymatic reactions in nitrogen fixation are catalyzed by the nitrogenase complex, which has 2 components: the iron protein and the molybdenum-iron protein.</text>
</comment>
<comment type="catalytic activity">
    <reaction evidence="1">
        <text>N2 + 8 reduced [2Fe-2S]-[ferredoxin] + 16 ATP + 16 H2O = H2 + 8 oxidized [2Fe-2S]-[ferredoxin] + 2 NH4(+) + 16 ADP + 16 phosphate + 6 H(+)</text>
        <dbReference type="Rhea" id="RHEA:21448"/>
        <dbReference type="Rhea" id="RHEA-COMP:10000"/>
        <dbReference type="Rhea" id="RHEA-COMP:10001"/>
        <dbReference type="ChEBI" id="CHEBI:15377"/>
        <dbReference type="ChEBI" id="CHEBI:15378"/>
        <dbReference type="ChEBI" id="CHEBI:17997"/>
        <dbReference type="ChEBI" id="CHEBI:18276"/>
        <dbReference type="ChEBI" id="CHEBI:28938"/>
        <dbReference type="ChEBI" id="CHEBI:30616"/>
        <dbReference type="ChEBI" id="CHEBI:33737"/>
        <dbReference type="ChEBI" id="CHEBI:33738"/>
        <dbReference type="ChEBI" id="CHEBI:43474"/>
        <dbReference type="ChEBI" id="CHEBI:456216"/>
        <dbReference type="EC" id="1.18.6.1"/>
    </reaction>
</comment>
<comment type="cofactor">
    <cofactor evidence="1">
        <name>[4Fe-4S] cluster</name>
        <dbReference type="ChEBI" id="CHEBI:49883"/>
    </cofactor>
    <text evidence="1">Binds 1 [4Fe-4S] cluster per dimer.</text>
</comment>
<comment type="subunit">
    <text evidence="1">Homodimer.</text>
</comment>
<comment type="PTM">
    <text evidence="1">The reversible ADP-ribosylation of Arg-97 inactivates the nitrogenase reductase and regulates nitrogenase activity.</text>
</comment>
<comment type="similarity">
    <text evidence="1">Belongs to the NifH/BchL/ChlL family.</text>
</comment>
<accession>A6TTY3</accession>
<reference key="1">
    <citation type="journal article" date="2016" name="Genome Announc.">
        <title>Complete genome sequence of Alkaliphilus metalliredigens strain QYMF, an alkaliphilic and metal-reducing bacterium isolated from borax-contaminated leachate ponds.</title>
        <authorList>
            <person name="Hwang C."/>
            <person name="Copeland A."/>
            <person name="Lucas S."/>
            <person name="Lapidus A."/>
            <person name="Barry K."/>
            <person name="Detter J.C."/>
            <person name="Glavina Del Rio T."/>
            <person name="Hammon N."/>
            <person name="Israni S."/>
            <person name="Dalin E."/>
            <person name="Tice H."/>
            <person name="Pitluck S."/>
            <person name="Chertkov O."/>
            <person name="Brettin T."/>
            <person name="Bruce D."/>
            <person name="Han C."/>
            <person name="Schmutz J."/>
            <person name="Larimer F."/>
            <person name="Land M.L."/>
            <person name="Hauser L."/>
            <person name="Kyrpides N."/>
            <person name="Mikhailova N."/>
            <person name="Ye Q."/>
            <person name="Zhou J."/>
            <person name="Richardson P."/>
            <person name="Fields M.W."/>
        </authorList>
    </citation>
    <scope>NUCLEOTIDE SEQUENCE [LARGE SCALE GENOMIC DNA]</scope>
    <source>
        <strain>QYMF</strain>
    </source>
</reference>
<evidence type="ECO:0000255" key="1">
    <source>
        <dbReference type="HAMAP-Rule" id="MF_00533"/>
    </source>
</evidence>